<protein>
    <recommendedName>
        <fullName>Uncharacterized protein YddK</fullName>
        <ecNumber evidence="1">3.2.2.6</ecNumber>
    </recommendedName>
</protein>
<reference key="1">
    <citation type="submission" date="1997-03" db="EMBL/GenBank/DDBJ databases">
        <title>A 148 kbp sequence of the region between 35 and 47 degree of the Bacillus subtilis genome.</title>
        <authorList>
            <person name="Kasahara Y."/>
            <person name="Nakai S."/>
            <person name="Lee S."/>
            <person name="Sadaie Y."/>
            <person name="Ogasawara N."/>
        </authorList>
    </citation>
    <scope>NUCLEOTIDE SEQUENCE [GENOMIC DNA]</scope>
    <source>
        <strain>168</strain>
    </source>
</reference>
<reference key="2">
    <citation type="journal article" date="1997" name="Nature">
        <title>The complete genome sequence of the Gram-positive bacterium Bacillus subtilis.</title>
        <authorList>
            <person name="Kunst F."/>
            <person name="Ogasawara N."/>
            <person name="Moszer I."/>
            <person name="Albertini A.M."/>
            <person name="Alloni G."/>
            <person name="Azevedo V."/>
            <person name="Bertero M.G."/>
            <person name="Bessieres P."/>
            <person name="Bolotin A."/>
            <person name="Borchert S."/>
            <person name="Borriss R."/>
            <person name="Boursier L."/>
            <person name="Brans A."/>
            <person name="Braun M."/>
            <person name="Brignell S.C."/>
            <person name="Bron S."/>
            <person name="Brouillet S."/>
            <person name="Bruschi C.V."/>
            <person name="Caldwell B."/>
            <person name="Capuano V."/>
            <person name="Carter N.M."/>
            <person name="Choi S.-K."/>
            <person name="Codani J.-J."/>
            <person name="Connerton I.F."/>
            <person name="Cummings N.J."/>
            <person name="Daniel R.A."/>
            <person name="Denizot F."/>
            <person name="Devine K.M."/>
            <person name="Duesterhoeft A."/>
            <person name="Ehrlich S.D."/>
            <person name="Emmerson P.T."/>
            <person name="Entian K.-D."/>
            <person name="Errington J."/>
            <person name="Fabret C."/>
            <person name="Ferrari E."/>
            <person name="Foulger D."/>
            <person name="Fritz C."/>
            <person name="Fujita M."/>
            <person name="Fujita Y."/>
            <person name="Fuma S."/>
            <person name="Galizzi A."/>
            <person name="Galleron N."/>
            <person name="Ghim S.-Y."/>
            <person name="Glaser P."/>
            <person name="Goffeau A."/>
            <person name="Golightly E.J."/>
            <person name="Grandi G."/>
            <person name="Guiseppi G."/>
            <person name="Guy B.J."/>
            <person name="Haga K."/>
            <person name="Haiech J."/>
            <person name="Harwood C.R."/>
            <person name="Henaut A."/>
            <person name="Hilbert H."/>
            <person name="Holsappel S."/>
            <person name="Hosono S."/>
            <person name="Hullo M.-F."/>
            <person name="Itaya M."/>
            <person name="Jones L.-M."/>
            <person name="Joris B."/>
            <person name="Karamata D."/>
            <person name="Kasahara Y."/>
            <person name="Klaerr-Blanchard M."/>
            <person name="Klein C."/>
            <person name="Kobayashi Y."/>
            <person name="Koetter P."/>
            <person name="Koningstein G."/>
            <person name="Krogh S."/>
            <person name="Kumano M."/>
            <person name="Kurita K."/>
            <person name="Lapidus A."/>
            <person name="Lardinois S."/>
            <person name="Lauber J."/>
            <person name="Lazarevic V."/>
            <person name="Lee S.-M."/>
            <person name="Levine A."/>
            <person name="Liu H."/>
            <person name="Masuda S."/>
            <person name="Mauel C."/>
            <person name="Medigue C."/>
            <person name="Medina N."/>
            <person name="Mellado R.P."/>
            <person name="Mizuno M."/>
            <person name="Moestl D."/>
            <person name="Nakai S."/>
            <person name="Noback M."/>
            <person name="Noone D."/>
            <person name="O'Reilly M."/>
            <person name="Ogawa K."/>
            <person name="Ogiwara A."/>
            <person name="Oudega B."/>
            <person name="Park S.-H."/>
            <person name="Parro V."/>
            <person name="Pohl T.M."/>
            <person name="Portetelle D."/>
            <person name="Porwollik S."/>
            <person name="Prescott A.M."/>
            <person name="Presecan E."/>
            <person name="Pujic P."/>
            <person name="Purnelle B."/>
            <person name="Rapoport G."/>
            <person name="Rey M."/>
            <person name="Reynolds S."/>
            <person name="Rieger M."/>
            <person name="Rivolta C."/>
            <person name="Rocha E."/>
            <person name="Roche B."/>
            <person name="Rose M."/>
            <person name="Sadaie Y."/>
            <person name="Sato T."/>
            <person name="Scanlan E."/>
            <person name="Schleich S."/>
            <person name="Schroeter R."/>
            <person name="Scoffone F."/>
            <person name="Sekiguchi J."/>
            <person name="Sekowska A."/>
            <person name="Seror S.J."/>
            <person name="Serror P."/>
            <person name="Shin B.-S."/>
            <person name="Soldo B."/>
            <person name="Sorokin A."/>
            <person name="Tacconi E."/>
            <person name="Takagi T."/>
            <person name="Takahashi H."/>
            <person name="Takemaru K."/>
            <person name="Takeuchi M."/>
            <person name="Tamakoshi A."/>
            <person name="Tanaka T."/>
            <person name="Terpstra P."/>
            <person name="Tognoni A."/>
            <person name="Tosato V."/>
            <person name="Uchiyama S."/>
            <person name="Vandenbol M."/>
            <person name="Vannier F."/>
            <person name="Vassarotti A."/>
            <person name="Viari A."/>
            <person name="Wambutt R."/>
            <person name="Wedler E."/>
            <person name="Wedler H."/>
            <person name="Weitzenegger T."/>
            <person name="Winters P."/>
            <person name="Wipat A."/>
            <person name="Yamamoto H."/>
            <person name="Yamane K."/>
            <person name="Yasumoto K."/>
            <person name="Yata K."/>
            <person name="Yoshida K."/>
            <person name="Yoshikawa H.-F."/>
            <person name="Zumstein E."/>
            <person name="Yoshikawa H."/>
            <person name="Danchin A."/>
        </authorList>
    </citation>
    <scope>NUCLEOTIDE SEQUENCE [LARGE SCALE GENOMIC DNA]</scope>
    <source>
        <strain>168</strain>
    </source>
</reference>
<proteinExistence type="inferred from homology"/>
<name>YDDK_BACSU</name>
<gene>
    <name type="primary">yddK</name>
    <name type="ordered locus">BSU05000</name>
</gene>
<accession>P96648</accession>
<dbReference type="EC" id="3.2.2.6" evidence="1"/>
<dbReference type="EMBL" id="AB001488">
    <property type="protein sequence ID" value="BAA19337.1"/>
    <property type="molecule type" value="Genomic_DNA"/>
</dbReference>
<dbReference type="EMBL" id="AL009126">
    <property type="protein sequence ID" value="CAB12307.1"/>
    <property type="molecule type" value="Genomic_DNA"/>
</dbReference>
<dbReference type="PIR" id="D69776">
    <property type="entry name" value="D69776"/>
</dbReference>
<dbReference type="RefSeq" id="NP_388381.1">
    <property type="nucleotide sequence ID" value="NC_000964.3"/>
</dbReference>
<dbReference type="RefSeq" id="WP_009966636.1">
    <property type="nucleotide sequence ID" value="NZ_OZ025638.1"/>
</dbReference>
<dbReference type="FunCoup" id="P96648">
    <property type="interactions" value="29"/>
</dbReference>
<dbReference type="IntAct" id="P96648">
    <property type="interactions" value="1"/>
</dbReference>
<dbReference type="STRING" id="224308.BSU05000"/>
<dbReference type="jPOST" id="P96648"/>
<dbReference type="PaxDb" id="224308-BSU05000"/>
<dbReference type="EnsemblBacteria" id="CAB12307">
    <property type="protein sequence ID" value="CAB12307"/>
    <property type="gene ID" value="BSU_05000"/>
</dbReference>
<dbReference type="GeneID" id="939917"/>
<dbReference type="KEGG" id="bsu:BSU05000"/>
<dbReference type="PATRIC" id="fig|224308.179.peg.531"/>
<dbReference type="eggNOG" id="ENOG50332G0">
    <property type="taxonomic scope" value="Bacteria"/>
</dbReference>
<dbReference type="InParanoid" id="P96648"/>
<dbReference type="OrthoDB" id="4772211at2"/>
<dbReference type="BioCyc" id="BSUB:BSU05000-MONOMER"/>
<dbReference type="Proteomes" id="UP000001570">
    <property type="component" value="Chromosome"/>
</dbReference>
<dbReference type="GO" id="GO:0061809">
    <property type="term" value="F:NAD+ nucleosidase activity, cyclic ADP-ribose generating"/>
    <property type="evidence" value="ECO:0007669"/>
    <property type="project" value="UniProtKB-EC"/>
</dbReference>
<dbReference type="GO" id="GO:0007165">
    <property type="term" value="P:signal transduction"/>
    <property type="evidence" value="ECO:0007669"/>
    <property type="project" value="InterPro"/>
</dbReference>
<dbReference type="Gene3D" id="3.40.50.10140">
    <property type="entry name" value="Toll/interleukin-1 receptor homology (TIR) domain"/>
    <property type="match status" value="1"/>
</dbReference>
<dbReference type="InterPro" id="IPR000157">
    <property type="entry name" value="TIR_dom"/>
</dbReference>
<dbReference type="InterPro" id="IPR035897">
    <property type="entry name" value="Toll_tir_struct_dom_sf"/>
</dbReference>
<dbReference type="Pfam" id="PF13676">
    <property type="entry name" value="TIR_2"/>
    <property type="match status" value="1"/>
</dbReference>
<dbReference type="SMART" id="SM00255">
    <property type="entry name" value="TIR"/>
    <property type="match status" value="1"/>
</dbReference>
<dbReference type="SUPFAM" id="SSF52200">
    <property type="entry name" value="Toll/Interleukin receptor TIR domain"/>
    <property type="match status" value="1"/>
</dbReference>
<dbReference type="PROSITE" id="PS50104">
    <property type="entry name" value="TIR"/>
    <property type="match status" value="1"/>
</dbReference>
<keyword id="KW-0378">Hydrolase</keyword>
<keyword id="KW-0520">NAD</keyword>
<keyword id="KW-1185">Reference proteome</keyword>
<sequence length="266" mass="31289">MDTLKKLKFEANGIIGVLLDYSREPVLTNIIDQFRTSLESNDIELIRYSLEQLKTWYARNRNEIYKNEFVFNEFEHHETENKIKKFLDELPVVDETEKSSITHFSSDQNRELEKKIFISHSSKDKIVCNAFVELLEDIGVSSEDIIYTSSPYHGIPGDEDIFEYLKKHLFKGAYVFYMLSDNYYDSVYCLNEMGATWVNSNNCSTFILPGFKGEIKGVIDKNKKAFSLEEPIDLFNLKEKILRMYDLTLEDKKWERIKAKFNTKLK</sequence>
<feature type="chain" id="PRO_0000049499" description="Uncharacterized protein YddK">
    <location>
        <begin position="1"/>
        <end position="266"/>
    </location>
</feature>
<feature type="domain" description="TIR" evidence="1">
    <location>
        <begin position="112"/>
        <end position="261"/>
    </location>
</feature>
<feature type="active site" evidence="1">
    <location>
        <position position="192"/>
    </location>
</feature>
<comment type="catalytic activity">
    <reaction evidence="1">
        <text>NAD(+) + H2O = ADP-D-ribose + nicotinamide + H(+)</text>
        <dbReference type="Rhea" id="RHEA:16301"/>
        <dbReference type="ChEBI" id="CHEBI:15377"/>
        <dbReference type="ChEBI" id="CHEBI:15378"/>
        <dbReference type="ChEBI" id="CHEBI:17154"/>
        <dbReference type="ChEBI" id="CHEBI:57540"/>
        <dbReference type="ChEBI" id="CHEBI:57967"/>
        <dbReference type="EC" id="3.2.2.6"/>
    </reaction>
    <physiologicalReaction direction="left-to-right" evidence="1">
        <dbReference type="Rhea" id="RHEA:16302"/>
    </physiologicalReaction>
</comment>
<comment type="domain">
    <text evidence="1">The TIR domain mediates NAD(+) hydrolase (NADase) activity. Self-association of TIR domains is required for NADase activity.</text>
</comment>
<organism>
    <name type="scientific">Bacillus subtilis (strain 168)</name>
    <dbReference type="NCBI Taxonomy" id="224308"/>
    <lineage>
        <taxon>Bacteria</taxon>
        <taxon>Bacillati</taxon>
        <taxon>Bacillota</taxon>
        <taxon>Bacilli</taxon>
        <taxon>Bacillales</taxon>
        <taxon>Bacillaceae</taxon>
        <taxon>Bacillus</taxon>
    </lineage>
</organism>
<evidence type="ECO:0000255" key="1">
    <source>
        <dbReference type="PROSITE-ProRule" id="PRU00204"/>
    </source>
</evidence>